<organism>
    <name type="scientific">Bacillus phage phi15</name>
    <name type="common">Bacteriophage phi-15</name>
    <dbReference type="NCBI Taxonomy" id="10755"/>
    <lineage>
        <taxon>Viruses</taxon>
        <taxon>Duplodnaviria</taxon>
        <taxon>Heunggongvirae</taxon>
        <taxon>Uroviricota</taxon>
        <taxon>Caudoviricetes</taxon>
        <taxon>Salasmaviridae</taxon>
        <taxon>Picovirinae</taxon>
        <taxon>Salasvirus</taxon>
        <taxon>Salasvirus phi29</taxon>
    </lineage>
</organism>
<gene>
    <name type="primary">16.5</name>
</gene>
<organismHost>
    <name type="scientific">Bacillus subtilis</name>
    <dbReference type="NCBI Taxonomy" id="1423"/>
</organismHost>
<comment type="similarity">
    <text evidence="1">Belongs to the phi29likevirus gp16.5 family.</text>
</comment>
<reference key="1">
    <citation type="journal article" date="1989" name="Gene">
        <title>Nucleotide sequence of the right early region of Bacillus phage phi 15 and comparison with related phages: reorganization of gene 17 during evolution.</title>
        <authorList>
            <person name="Benes V."/>
            <person name="Arnold L."/>
            <person name="Smrt J."/>
            <person name="Paces V."/>
        </authorList>
    </citation>
    <scope>NUCLEOTIDE SEQUENCE [GENOMIC DNA]</scope>
</reference>
<sequence>MNQKEFQAVLDWMLSHTIIQFHEYNYMLQKSLPFLRR</sequence>
<evidence type="ECO:0000305" key="1"/>
<accession>P68933</accession>
<accession>P08384</accession>
<proteinExistence type="inferred from homology"/>
<dbReference type="EMBL" id="M28830">
    <property type="protein sequence ID" value="AAA32334.1"/>
    <property type="molecule type" value="Genomic_DNA"/>
</dbReference>
<dbReference type="PIR" id="JS0197">
    <property type="entry name" value="WRBPF7"/>
</dbReference>
<dbReference type="SMR" id="P68933"/>
<feature type="chain" id="PRO_0000106608" description="Gene product 16.5">
    <location>
        <begin position="1"/>
        <end position="37"/>
    </location>
</feature>
<keyword id="KW-0244">Early protein</keyword>
<name>GP165_BPPH5</name>
<protein>
    <recommendedName>
        <fullName>Gene product 16.5</fullName>
        <shortName>gp16.5</shortName>
    </recommendedName>
    <alternativeName>
        <fullName>Early protein GP16.5</fullName>
    </alternativeName>
    <alternativeName>
        <fullName>Protein p16.5</fullName>
    </alternativeName>
</protein>